<organism>
    <name type="scientific">Wound tumor virus</name>
    <name type="common">WTV</name>
    <dbReference type="NCBI Taxonomy" id="10987"/>
    <lineage>
        <taxon>Viruses</taxon>
        <taxon>Riboviria</taxon>
        <taxon>Orthornavirae</taxon>
        <taxon>Duplornaviricota</taxon>
        <taxon>Resentoviricetes</taxon>
        <taxon>Reovirales</taxon>
        <taxon>Sedoreoviridae</taxon>
        <taxon>Phytoreovirus</taxon>
    </lineage>
</organism>
<proteinExistence type="inferred from homology"/>
<evidence type="ECO:0000250" key="1"/>
<evidence type="ECO:0000256" key="2">
    <source>
        <dbReference type="SAM" id="MobiDB-lite"/>
    </source>
</evidence>
<evidence type="ECO:0000305" key="3"/>
<dbReference type="EMBL" id="M11133">
    <property type="protein sequence ID" value="AAA48508.1"/>
    <property type="molecule type" value="Genomic_RNA"/>
</dbReference>
<dbReference type="PIR" id="A33387">
    <property type="entry name" value="MNXRWW"/>
</dbReference>
<dbReference type="RefSeq" id="YP_009508279.1">
    <property type="nucleotide sequence ID" value="NC_038951.1"/>
</dbReference>
<dbReference type="GeneID" id="37619690"/>
<dbReference type="OrthoDB" id="28784at10239"/>
<dbReference type="Proteomes" id="UP000242823">
    <property type="component" value="Genome"/>
</dbReference>
<dbReference type="GO" id="GO:0030430">
    <property type="term" value="C:host cell cytoplasm"/>
    <property type="evidence" value="ECO:0007669"/>
    <property type="project" value="UniProtKB-SubCell"/>
</dbReference>
<dbReference type="GO" id="GO:0003723">
    <property type="term" value="F:RNA binding"/>
    <property type="evidence" value="ECO:0007669"/>
    <property type="project" value="UniProtKB-KW"/>
</dbReference>
<dbReference type="InterPro" id="IPR035351">
    <property type="entry name" value="Pns11/12"/>
</dbReference>
<dbReference type="Pfam" id="PF17464">
    <property type="entry name" value="Pns11_12"/>
    <property type="match status" value="1"/>
</dbReference>
<organismHost>
    <name type="scientific">Catharanthus roseus</name>
    <name type="common">Madagascar periwinkle</name>
    <name type="synonym">Vinca rosea</name>
    <dbReference type="NCBI Taxonomy" id="4058"/>
</organismHost>
<organismHost>
    <name type="scientific">Melilotus officinalis</name>
    <name type="common">Yellow sweet clover</name>
    <name type="synonym">Trifolium officinale</name>
    <dbReference type="NCBI Taxonomy" id="47083"/>
</organismHost>
<organismHost>
    <name type="scientific">Trifolium incarnatum</name>
    <name type="common">Crimson clover</name>
    <dbReference type="NCBI Taxonomy" id="60916"/>
</organismHost>
<accession>P13278</accession>
<comment type="function">
    <text evidence="1">Constituent of viral factories. Binds to ssRNA and dsRNA (By similarity).</text>
</comment>
<comment type="subcellular location">
    <subcellularLocation>
        <location evidence="1">Host cytoplasm</location>
    </subcellularLocation>
    <text evidence="1">Constituent of spherical cytoplasmic structures, called virus factories, that appear early after infection and are the site of viral replication and packaging.</text>
</comment>
<comment type="similarity">
    <text evidence="3">Belongs to the phytoreovirus RNA-binding protein family.</text>
</comment>
<name>NSP11_WTV</name>
<keyword id="KW-1035">Host cytoplasm</keyword>
<keyword id="KW-0694">RNA-binding</keyword>
<protein>
    <recommendedName>
        <fullName>RNA-binding protein</fullName>
    </recommendedName>
    <alternativeName>
        <fullName>Non-structural protein 12</fullName>
        <shortName>Pns12</shortName>
    </alternativeName>
</protein>
<sequence length="178" mass="19196">MSNKESNVALQTLRVTKDMKDFLSHRIVGEPPANIKIEYQKIHRYRTCVCPSTGHISELCPSGDLILSLGAHRNVIAAATVYDVVKNKIKSTTSKAGTSSTLSSLGLSGFQKPKIGSKNKKTMFSKQNNSTNESDESGGEEGSSLNDLPKSDLINAIMELASQGRNNSKGKGKRGGKR</sequence>
<reference key="1">
    <citation type="journal article" date="1985" name="Virology">
        <title>Molecular cloning and characterization of the genome of wound tumor virus: a tumor-inducing plant reovirus.</title>
        <authorList>
            <person name="Asamizu T."/>
            <person name="Summers D."/>
            <person name="Motika M.B."/>
            <person name="Anzola J.V."/>
            <person name="Nuss D.L."/>
        </authorList>
    </citation>
    <scope>NUCLEOTIDE SEQUENCE [GENOMIC RNA]</scope>
</reference>
<feature type="chain" id="PRO_0000222775" description="RNA-binding protein">
    <location>
        <begin position="1"/>
        <end position="178"/>
    </location>
</feature>
<feature type="region of interest" description="Disordered" evidence="2">
    <location>
        <begin position="113"/>
        <end position="178"/>
    </location>
</feature>
<feature type="compositionally biased region" description="Basic residues" evidence="2">
    <location>
        <begin position="168"/>
        <end position="178"/>
    </location>
</feature>